<organism>
    <name type="scientific">Acidothermus cellulolyticus (strain ATCC 43068 / DSM 8971 / 11B)</name>
    <dbReference type="NCBI Taxonomy" id="351607"/>
    <lineage>
        <taxon>Bacteria</taxon>
        <taxon>Bacillati</taxon>
        <taxon>Actinomycetota</taxon>
        <taxon>Actinomycetes</taxon>
        <taxon>Acidothermales</taxon>
        <taxon>Acidothermaceae</taxon>
        <taxon>Acidothermus</taxon>
    </lineage>
</organism>
<proteinExistence type="inferred from homology"/>
<feature type="chain" id="PRO_0000305382" description="Pantothenate synthetase">
    <location>
        <begin position="1"/>
        <end position="303"/>
    </location>
</feature>
<feature type="region of interest" description="Disordered" evidence="2">
    <location>
        <begin position="1"/>
        <end position="21"/>
    </location>
</feature>
<feature type="active site" description="Proton donor" evidence="1">
    <location>
        <position position="55"/>
    </location>
</feature>
<feature type="binding site" evidence="1">
    <location>
        <begin position="48"/>
        <end position="55"/>
    </location>
    <ligand>
        <name>ATP</name>
        <dbReference type="ChEBI" id="CHEBI:30616"/>
    </ligand>
</feature>
<feature type="binding site" evidence="1">
    <location>
        <position position="79"/>
    </location>
    <ligand>
        <name>(R)-pantoate</name>
        <dbReference type="ChEBI" id="CHEBI:15980"/>
    </ligand>
</feature>
<feature type="binding site" evidence="1">
    <location>
        <position position="79"/>
    </location>
    <ligand>
        <name>beta-alanine</name>
        <dbReference type="ChEBI" id="CHEBI:57966"/>
    </ligand>
</feature>
<feature type="binding site" evidence="1">
    <location>
        <begin position="165"/>
        <end position="168"/>
    </location>
    <ligand>
        <name>ATP</name>
        <dbReference type="ChEBI" id="CHEBI:30616"/>
    </ligand>
</feature>
<feature type="binding site" evidence="1">
    <location>
        <position position="171"/>
    </location>
    <ligand>
        <name>(R)-pantoate</name>
        <dbReference type="ChEBI" id="CHEBI:15980"/>
    </ligand>
</feature>
<feature type="binding site" evidence="1">
    <location>
        <begin position="202"/>
        <end position="205"/>
    </location>
    <ligand>
        <name>ATP</name>
        <dbReference type="ChEBI" id="CHEBI:30616"/>
    </ligand>
</feature>
<sequence>MIATGHGGAERRTTAGDGTARPVVARTIGELRAARAALTGPVAFVPTMGALHDGHRSLLRIARHHGDHVVVSIFVNPLQFGPAEDFDRYPRTLDADLAMCAAEGVDLVFVPPAAEMYPSEPQVRVSAGPLGERFEGSVRPGHFDGVLTVVAKLFQLVQPDVAVFGRKDAQQLALVRRMVADLNLPVQIIAAPTFREPDGLAASSRNRYLTDADRAQARALPTALTTAAAVAAAGGPPSEMIEMARKVLADAAVTLDYVAVVDEATFDEIDDAEWSQRGEGLCIAAIRVGGTRLIDNMPMRKAD</sequence>
<protein>
    <recommendedName>
        <fullName evidence="1">Pantothenate synthetase</fullName>
        <shortName evidence="1">PS</shortName>
        <ecNumber evidence="1">6.3.2.1</ecNumber>
    </recommendedName>
    <alternativeName>
        <fullName evidence="1">Pantoate--beta-alanine ligase</fullName>
    </alternativeName>
    <alternativeName>
        <fullName evidence="1">Pantoate-activating enzyme</fullName>
    </alternativeName>
</protein>
<reference key="1">
    <citation type="journal article" date="2009" name="Genome Res.">
        <title>Complete genome of the cellulolytic thermophile Acidothermus cellulolyticus 11B provides insights into its ecophysiological and evolutionary adaptations.</title>
        <authorList>
            <person name="Barabote R.D."/>
            <person name="Xie G."/>
            <person name="Leu D.H."/>
            <person name="Normand P."/>
            <person name="Necsulea A."/>
            <person name="Daubin V."/>
            <person name="Medigue C."/>
            <person name="Adney W.S."/>
            <person name="Xu X.C."/>
            <person name="Lapidus A."/>
            <person name="Parales R.E."/>
            <person name="Detter C."/>
            <person name="Pujic P."/>
            <person name="Bruce D."/>
            <person name="Lavire C."/>
            <person name="Challacombe J.F."/>
            <person name="Brettin T.S."/>
            <person name="Berry A.M."/>
        </authorList>
    </citation>
    <scope>NUCLEOTIDE SEQUENCE [LARGE SCALE GENOMIC DNA]</scope>
    <source>
        <strain>ATCC 43068 / DSM 8971 / 11B</strain>
    </source>
</reference>
<name>PANC_ACIC1</name>
<accession>A0LRC5</accession>
<dbReference type="EC" id="6.3.2.1" evidence="1"/>
<dbReference type="EMBL" id="CP000481">
    <property type="protein sequence ID" value="ABK51985.1"/>
    <property type="molecule type" value="Genomic_DNA"/>
</dbReference>
<dbReference type="RefSeq" id="WP_011719049.1">
    <property type="nucleotide sequence ID" value="NC_008578.1"/>
</dbReference>
<dbReference type="SMR" id="A0LRC5"/>
<dbReference type="FunCoup" id="A0LRC5">
    <property type="interactions" value="276"/>
</dbReference>
<dbReference type="STRING" id="351607.Acel_0211"/>
<dbReference type="KEGG" id="ace:Acel_0211"/>
<dbReference type="eggNOG" id="COG0414">
    <property type="taxonomic scope" value="Bacteria"/>
</dbReference>
<dbReference type="HOGENOM" id="CLU_047148_0_2_11"/>
<dbReference type="InParanoid" id="A0LRC5"/>
<dbReference type="UniPathway" id="UPA00028">
    <property type="reaction ID" value="UER00005"/>
</dbReference>
<dbReference type="Proteomes" id="UP000008221">
    <property type="component" value="Chromosome"/>
</dbReference>
<dbReference type="GO" id="GO:0005829">
    <property type="term" value="C:cytosol"/>
    <property type="evidence" value="ECO:0007669"/>
    <property type="project" value="TreeGrafter"/>
</dbReference>
<dbReference type="GO" id="GO:0005524">
    <property type="term" value="F:ATP binding"/>
    <property type="evidence" value="ECO:0007669"/>
    <property type="project" value="UniProtKB-KW"/>
</dbReference>
<dbReference type="GO" id="GO:0004592">
    <property type="term" value="F:pantoate-beta-alanine ligase activity"/>
    <property type="evidence" value="ECO:0007669"/>
    <property type="project" value="UniProtKB-UniRule"/>
</dbReference>
<dbReference type="GO" id="GO:0015940">
    <property type="term" value="P:pantothenate biosynthetic process"/>
    <property type="evidence" value="ECO:0007669"/>
    <property type="project" value="UniProtKB-UniRule"/>
</dbReference>
<dbReference type="CDD" id="cd00560">
    <property type="entry name" value="PanC"/>
    <property type="match status" value="1"/>
</dbReference>
<dbReference type="FunFam" id="3.40.50.620:FF:000114">
    <property type="entry name" value="Pantothenate synthetase"/>
    <property type="match status" value="1"/>
</dbReference>
<dbReference type="Gene3D" id="3.40.50.620">
    <property type="entry name" value="HUPs"/>
    <property type="match status" value="1"/>
</dbReference>
<dbReference type="Gene3D" id="3.30.1300.10">
    <property type="entry name" value="Pantoate-beta-alanine ligase, C-terminal domain"/>
    <property type="match status" value="1"/>
</dbReference>
<dbReference type="HAMAP" id="MF_00158">
    <property type="entry name" value="PanC"/>
    <property type="match status" value="1"/>
</dbReference>
<dbReference type="InterPro" id="IPR004821">
    <property type="entry name" value="Cyt_trans-like"/>
</dbReference>
<dbReference type="InterPro" id="IPR003721">
    <property type="entry name" value="Pantoate_ligase"/>
</dbReference>
<dbReference type="InterPro" id="IPR042176">
    <property type="entry name" value="Pantoate_ligase_C"/>
</dbReference>
<dbReference type="InterPro" id="IPR014729">
    <property type="entry name" value="Rossmann-like_a/b/a_fold"/>
</dbReference>
<dbReference type="NCBIfam" id="TIGR00125">
    <property type="entry name" value="cyt_tran_rel"/>
    <property type="match status" value="1"/>
</dbReference>
<dbReference type="NCBIfam" id="TIGR00018">
    <property type="entry name" value="panC"/>
    <property type="match status" value="1"/>
</dbReference>
<dbReference type="PANTHER" id="PTHR21299">
    <property type="entry name" value="CYTIDYLATE KINASE/PANTOATE-BETA-ALANINE LIGASE"/>
    <property type="match status" value="1"/>
</dbReference>
<dbReference type="PANTHER" id="PTHR21299:SF1">
    <property type="entry name" value="PANTOATE--BETA-ALANINE LIGASE"/>
    <property type="match status" value="1"/>
</dbReference>
<dbReference type="Pfam" id="PF02569">
    <property type="entry name" value="Pantoate_ligase"/>
    <property type="match status" value="1"/>
</dbReference>
<dbReference type="SUPFAM" id="SSF52374">
    <property type="entry name" value="Nucleotidylyl transferase"/>
    <property type="match status" value="1"/>
</dbReference>
<evidence type="ECO:0000255" key="1">
    <source>
        <dbReference type="HAMAP-Rule" id="MF_00158"/>
    </source>
</evidence>
<evidence type="ECO:0000256" key="2">
    <source>
        <dbReference type="SAM" id="MobiDB-lite"/>
    </source>
</evidence>
<keyword id="KW-0067">ATP-binding</keyword>
<keyword id="KW-0963">Cytoplasm</keyword>
<keyword id="KW-0436">Ligase</keyword>
<keyword id="KW-0547">Nucleotide-binding</keyword>
<keyword id="KW-0566">Pantothenate biosynthesis</keyword>
<keyword id="KW-1185">Reference proteome</keyword>
<gene>
    <name evidence="1" type="primary">panC</name>
    <name type="ordered locus">Acel_0211</name>
</gene>
<comment type="function">
    <text evidence="1">Catalyzes the condensation of pantoate with beta-alanine in an ATP-dependent reaction via a pantoyl-adenylate intermediate.</text>
</comment>
<comment type="catalytic activity">
    <reaction evidence="1">
        <text>(R)-pantoate + beta-alanine + ATP = (R)-pantothenate + AMP + diphosphate + H(+)</text>
        <dbReference type="Rhea" id="RHEA:10912"/>
        <dbReference type="ChEBI" id="CHEBI:15378"/>
        <dbReference type="ChEBI" id="CHEBI:15980"/>
        <dbReference type="ChEBI" id="CHEBI:29032"/>
        <dbReference type="ChEBI" id="CHEBI:30616"/>
        <dbReference type="ChEBI" id="CHEBI:33019"/>
        <dbReference type="ChEBI" id="CHEBI:57966"/>
        <dbReference type="ChEBI" id="CHEBI:456215"/>
        <dbReference type="EC" id="6.3.2.1"/>
    </reaction>
</comment>
<comment type="pathway">
    <text evidence="1">Cofactor biosynthesis; (R)-pantothenate biosynthesis; (R)-pantothenate from (R)-pantoate and beta-alanine: step 1/1.</text>
</comment>
<comment type="subunit">
    <text evidence="1">Homodimer.</text>
</comment>
<comment type="subcellular location">
    <subcellularLocation>
        <location evidence="1">Cytoplasm</location>
    </subcellularLocation>
</comment>
<comment type="miscellaneous">
    <text evidence="1">The reaction proceeds by a bi uni uni bi ping pong mechanism.</text>
</comment>
<comment type="similarity">
    <text evidence="1">Belongs to the pantothenate synthetase family.</text>
</comment>